<name>COX1_EQUAS</name>
<comment type="function">
    <text evidence="3">Component of the cytochrome c oxidase, the last enzyme in the mitochondrial electron transport chain which drives oxidative phosphorylation. The respiratory chain contains 3 multisubunit complexes succinate dehydrogenase (complex II, CII), ubiquinol-cytochrome c oxidoreductase (cytochrome b-c1 complex, complex III, CIII) and cytochrome c oxidase (complex IV, CIV), that cooperate to transfer electrons derived from NADH and succinate to molecular oxygen, creating an electrochemical gradient over the inner membrane that drives transmembrane transport and the ATP synthase. Cytochrome c oxidase is the component of the respiratory chain that catalyzes the reduction of oxygen to water. Electrons originating from reduced cytochrome c in the intermembrane space (IMS) are transferred via the dinuclear copper A center (CU(A)) of subunit 2 and heme A of subunit 1 to the active site in subunit 1, a binuclear center (BNC) formed by heme A3 and copper B (CU(B)). The BNC reduces molecular oxygen to 2 water molecules using 4 electrons from cytochrome c in the IMS and 4 protons from the mitochondrial matrix.</text>
</comment>
<comment type="catalytic activity">
    <reaction evidence="3">
        <text>4 Fe(II)-[cytochrome c] + O2 + 8 H(+)(in) = 4 Fe(III)-[cytochrome c] + 2 H2O + 4 H(+)(out)</text>
        <dbReference type="Rhea" id="RHEA:11436"/>
        <dbReference type="Rhea" id="RHEA-COMP:10350"/>
        <dbReference type="Rhea" id="RHEA-COMP:14399"/>
        <dbReference type="ChEBI" id="CHEBI:15377"/>
        <dbReference type="ChEBI" id="CHEBI:15378"/>
        <dbReference type="ChEBI" id="CHEBI:15379"/>
        <dbReference type="ChEBI" id="CHEBI:29033"/>
        <dbReference type="ChEBI" id="CHEBI:29034"/>
        <dbReference type="EC" id="7.1.1.9"/>
    </reaction>
    <physiologicalReaction direction="left-to-right" evidence="3">
        <dbReference type="Rhea" id="RHEA:11437"/>
    </physiologicalReaction>
</comment>
<comment type="cofactor">
    <cofactor evidence="2">
        <name>heme</name>
        <dbReference type="ChEBI" id="CHEBI:30413"/>
    </cofactor>
    <text evidence="2">Binds 2 heme A groups non-covalently per subunit.</text>
</comment>
<comment type="cofactor">
    <cofactor evidence="2">
        <name>Cu cation</name>
        <dbReference type="ChEBI" id="CHEBI:23378"/>
    </cofactor>
    <text evidence="2">Binds a copper B center.</text>
</comment>
<comment type="pathway">
    <text evidence="3">Energy metabolism; oxidative phosphorylation.</text>
</comment>
<comment type="subunit">
    <text evidence="1 2">Component of the cytochrome c oxidase (complex IV, CIV), a multisubunit enzyme composed of 14 subunits. The complex is composed of a catalytic core of 3 subunits MT-CO1, MT-CO2 and MT-CO3, encoded in the mitochondrial DNA, and 11 supernumerary subunits COX4I, COX5A, COX5B, COX6A, COX6B, COX6C, COX7A, COX7B, COX7C, COX8 and NDUFA4, which are encoded in the nuclear genome. The complex exists as a monomer or a dimer and forms supercomplexes (SCs) in the inner mitochondrial membrane with NADH-ubiquinone oxidoreductase (complex I, CI) and ubiquinol-cytochrome c oxidoreductase (cytochrome b-c1 complex, complex III, CIII), resulting in different assemblies (supercomplex SCI(1)III(2)IV(1) and megacomplex MCI(2)III(2)IV(2)) (By similarity). As a newly synthesized protein, rapidly incorporates into a multi-subunit assembly intermediate in the inner membrane, called MITRAC (mitochondrial translation regulation assembly intermediate of cytochrome c oxidase) complex, whose core components are COA3/MITRAC12 and COX14. Within the MITRAC complex, interacts with COA3 and with SMIM20/MITRAC7; the interaction with SMIM20 stabilizes the newly synthesized MT-CO1 and prevents its premature turnover. Interacts with TMEM177 in a COX20-dependent manner (By similarity).</text>
</comment>
<comment type="subcellular location">
    <subcellularLocation>
        <location evidence="2">Mitochondrion inner membrane</location>
        <topology evidence="2">Multi-pass membrane protein</topology>
    </subcellularLocation>
</comment>
<comment type="similarity">
    <text evidence="4">Belongs to the heme-copper respiratory oxidase family.</text>
</comment>
<accession>P92477</accession>
<proteinExistence type="inferred from homology"/>
<protein>
    <recommendedName>
        <fullName>Cytochrome c oxidase subunit 1</fullName>
        <ecNumber>7.1.1.9</ecNumber>
    </recommendedName>
    <alternativeName>
        <fullName>Cytochrome c oxidase polypeptide I</fullName>
    </alternativeName>
</protein>
<sequence length="514" mass="57002">MFINRWLFSTNHKDIGTLYLLFGAWAGMVGTALSLLIRAELGQPGTLLGDDQIYNVIVTAHAFVMIFFMVMPIMIGGFGNWLVPLMIGAPDMAFPRMNNMSFWLLPPSFLLLLASSMIEAGAGTGWTVYPPLAGNLAHAGASVDLTIFSLHLAGVSSILGAINFITTIINMKPPALSQYQTPLFVWSVLITAVLLLLALPVLAAGITMLLTDRNLNTTFFDPAGGGDPILYQHLFWFFGHPEVYILILPGFGMISHIVTYYSGKKEPFGYMGMVWAMMSIGFLGFIVWAHHMFTVGMDVDTRAYFTSATMIIAIPTGVKVFSWLATLHGGNIKWSPAMLWALGFIFLFTVGGLTGIVLANSSLDIVLHDTYYVVAHFHYVLSMGAVFAIMGGFVHWFPLFSGYTLNQTWAKIHFTIMFVGVNMTFFPQHFLGLSGMPRRYSDYPDAYTTWNTISSMGSFISLTAVMLMIFMIWEAFASKREVSTVELTSTNLEWLHGCPPPYHTFEEPAYVNLK</sequence>
<feature type="chain" id="PRO_0000183333" description="Cytochrome c oxidase subunit 1">
    <location>
        <begin position="1"/>
        <end position="514"/>
    </location>
</feature>
<feature type="topological domain" description="Mitochondrial matrix" evidence="2">
    <location>
        <begin position="1"/>
        <end position="11"/>
    </location>
</feature>
<feature type="transmembrane region" description="Helical; Name=I" evidence="2">
    <location>
        <begin position="12"/>
        <end position="40"/>
    </location>
</feature>
<feature type="topological domain" description="Mitochondrial intermembrane" evidence="2">
    <location>
        <begin position="41"/>
        <end position="50"/>
    </location>
</feature>
<feature type="transmembrane region" description="Helical; Name=II" evidence="2">
    <location>
        <begin position="51"/>
        <end position="86"/>
    </location>
</feature>
<feature type="topological domain" description="Mitochondrial matrix" evidence="2">
    <location>
        <begin position="87"/>
        <end position="94"/>
    </location>
</feature>
<feature type="transmembrane region" description="Helical; Name=III" evidence="2">
    <location>
        <begin position="95"/>
        <end position="117"/>
    </location>
</feature>
<feature type="topological domain" description="Mitochondrial intermembrane" evidence="2">
    <location>
        <begin position="118"/>
        <end position="140"/>
    </location>
</feature>
<feature type="transmembrane region" description="Helical; Name=IV" evidence="2">
    <location>
        <begin position="141"/>
        <end position="170"/>
    </location>
</feature>
<feature type="topological domain" description="Mitochondrial matrix" evidence="2">
    <location>
        <begin position="171"/>
        <end position="182"/>
    </location>
</feature>
<feature type="transmembrane region" description="Helical; Name=V" evidence="2">
    <location>
        <begin position="183"/>
        <end position="212"/>
    </location>
</feature>
<feature type="topological domain" description="Mitochondrial intermembrane" evidence="2">
    <location>
        <begin position="213"/>
        <end position="227"/>
    </location>
</feature>
<feature type="transmembrane region" description="Helical; Name=VI" evidence="2">
    <location>
        <begin position="228"/>
        <end position="261"/>
    </location>
</feature>
<feature type="topological domain" description="Mitochondrial matrix" evidence="2">
    <location>
        <begin position="262"/>
        <end position="269"/>
    </location>
</feature>
<feature type="transmembrane region" description="Helical; Name=VII" evidence="2">
    <location>
        <begin position="270"/>
        <end position="286"/>
    </location>
</feature>
<feature type="topological domain" description="Mitochondrial intermembrane" evidence="2">
    <location>
        <begin position="287"/>
        <end position="298"/>
    </location>
</feature>
<feature type="transmembrane region" description="Helical; Name=VIII" evidence="2">
    <location>
        <begin position="299"/>
        <end position="327"/>
    </location>
</feature>
<feature type="topological domain" description="Mitochondrial matrix" evidence="2">
    <location>
        <begin position="328"/>
        <end position="335"/>
    </location>
</feature>
<feature type="transmembrane region" description="Helical; Name=IX" evidence="2">
    <location>
        <begin position="336"/>
        <end position="357"/>
    </location>
</feature>
<feature type="topological domain" description="Mitochondrial intermembrane" evidence="2">
    <location>
        <begin position="358"/>
        <end position="370"/>
    </location>
</feature>
<feature type="transmembrane region" description="Helical; Name=X" evidence="2">
    <location>
        <begin position="371"/>
        <end position="400"/>
    </location>
</feature>
<feature type="topological domain" description="Mitochondrial matrix" evidence="2">
    <location>
        <begin position="401"/>
        <end position="406"/>
    </location>
</feature>
<feature type="transmembrane region" description="Helical; Name=XI" evidence="2">
    <location>
        <begin position="407"/>
        <end position="433"/>
    </location>
</feature>
<feature type="topological domain" description="Mitochondrial intermembrane" evidence="2">
    <location>
        <begin position="434"/>
        <end position="446"/>
    </location>
</feature>
<feature type="transmembrane region" description="Helical; Name=XII" evidence="2">
    <location>
        <begin position="447"/>
        <end position="478"/>
    </location>
</feature>
<feature type="topological domain" description="Mitochondrial matrix" evidence="2">
    <location>
        <begin position="479"/>
        <end position="514"/>
    </location>
</feature>
<feature type="binding site" evidence="2">
    <location>
        <position position="40"/>
    </location>
    <ligand>
        <name>Na(+)</name>
        <dbReference type="ChEBI" id="CHEBI:29101"/>
    </ligand>
</feature>
<feature type="binding site" evidence="2">
    <location>
        <position position="45"/>
    </location>
    <ligand>
        <name>Na(+)</name>
        <dbReference type="ChEBI" id="CHEBI:29101"/>
    </ligand>
</feature>
<feature type="binding site" description="axial binding residue" evidence="2">
    <location>
        <position position="61"/>
    </location>
    <ligand>
        <name>Fe(II)-heme a</name>
        <dbReference type="ChEBI" id="CHEBI:61715"/>
        <note>low-spin</note>
    </ligand>
    <ligandPart>
        <name>Fe</name>
        <dbReference type="ChEBI" id="CHEBI:18248"/>
    </ligandPart>
</feature>
<feature type="binding site" evidence="2">
    <location>
        <position position="240"/>
    </location>
    <ligand>
        <name>Cu cation</name>
        <dbReference type="ChEBI" id="CHEBI:23378"/>
        <label>B</label>
    </ligand>
</feature>
<feature type="binding site" evidence="2">
    <location>
        <position position="244"/>
    </location>
    <ligand>
        <name>O2</name>
        <dbReference type="ChEBI" id="CHEBI:15379"/>
    </ligand>
</feature>
<feature type="binding site" evidence="2">
    <location>
        <position position="290"/>
    </location>
    <ligand>
        <name>Cu cation</name>
        <dbReference type="ChEBI" id="CHEBI:23378"/>
        <label>B</label>
    </ligand>
</feature>
<feature type="binding site" evidence="2">
    <location>
        <position position="291"/>
    </location>
    <ligand>
        <name>Cu cation</name>
        <dbReference type="ChEBI" id="CHEBI:23378"/>
        <label>B</label>
    </ligand>
</feature>
<feature type="binding site" evidence="2">
    <location>
        <position position="368"/>
    </location>
    <ligand>
        <name>Mg(2+)</name>
        <dbReference type="ChEBI" id="CHEBI:18420"/>
        <note>ligand shared with MT-CO2</note>
    </ligand>
</feature>
<feature type="binding site" evidence="2">
    <location>
        <position position="369"/>
    </location>
    <ligand>
        <name>Mg(2+)</name>
        <dbReference type="ChEBI" id="CHEBI:18420"/>
        <note>ligand shared with MT-CO2</note>
    </ligand>
</feature>
<feature type="binding site" description="axial binding residue" evidence="2">
    <location>
        <position position="376"/>
    </location>
    <ligand>
        <name>heme a3</name>
        <dbReference type="ChEBI" id="CHEBI:83282"/>
        <note>high-spin</note>
    </ligand>
    <ligandPart>
        <name>Fe</name>
        <dbReference type="ChEBI" id="CHEBI:18248"/>
    </ligandPart>
</feature>
<feature type="binding site" description="axial binding residue" evidence="2">
    <location>
        <position position="378"/>
    </location>
    <ligand>
        <name>Fe(II)-heme a</name>
        <dbReference type="ChEBI" id="CHEBI:61715"/>
        <note>low-spin</note>
    </ligand>
    <ligandPart>
        <name>Fe</name>
        <dbReference type="ChEBI" id="CHEBI:18248"/>
    </ligandPart>
</feature>
<feature type="binding site" evidence="2">
    <location>
        <position position="441"/>
    </location>
    <ligand>
        <name>Na(+)</name>
        <dbReference type="ChEBI" id="CHEBI:29101"/>
    </ligand>
</feature>
<feature type="cross-link" description="1'-histidyl-3'-tyrosine (His-Tyr)" evidence="2">
    <location>
        <begin position="240"/>
        <end position="244"/>
    </location>
</feature>
<geneLocation type="mitochondrion"/>
<organism>
    <name type="scientific">Equus asinus</name>
    <name type="common">Donkey</name>
    <name type="synonym">Equus africanus asinus</name>
    <dbReference type="NCBI Taxonomy" id="9793"/>
    <lineage>
        <taxon>Eukaryota</taxon>
        <taxon>Metazoa</taxon>
        <taxon>Chordata</taxon>
        <taxon>Craniata</taxon>
        <taxon>Vertebrata</taxon>
        <taxon>Euteleostomi</taxon>
        <taxon>Mammalia</taxon>
        <taxon>Eutheria</taxon>
        <taxon>Laurasiatheria</taxon>
        <taxon>Perissodactyla</taxon>
        <taxon>Equidae</taxon>
        <taxon>Equus</taxon>
    </lineage>
</organism>
<keyword id="KW-0106">Calcium</keyword>
<keyword id="KW-0186">Copper</keyword>
<keyword id="KW-0249">Electron transport</keyword>
<keyword id="KW-0349">Heme</keyword>
<keyword id="KW-0408">Iron</keyword>
<keyword id="KW-0460">Magnesium</keyword>
<keyword id="KW-0472">Membrane</keyword>
<keyword id="KW-0479">Metal-binding</keyword>
<keyword id="KW-0496">Mitochondrion</keyword>
<keyword id="KW-0999">Mitochondrion inner membrane</keyword>
<keyword id="KW-1185">Reference proteome</keyword>
<keyword id="KW-0679">Respiratory chain</keyword>
<keyword id="KW-0915">Sodium</keyword>
<keyword id="KW-1278">Translocase</keyword>
<keyword id="KW-0812">Transmembrane</keyword>
<keyword id="KW-1133">Transmembrane helix</keyword>
<keyword id="KW-0813">Transport</keyword>
<reference key="1">
    <citation type="journal article" date="1996" name="J. Mol. Evol.">
        <title>The complete mitochondrial DNA (mtDNA) of the donkey and mtDNA comparisons among four closely related mammalian species-pairs.</title>
        <authorList>
            <person name="Xu X."/>
            <person name="Gullberg A."/>
            <person name="Arnason U."/>
        </authorList>
    </citation>
    <scope>NUCLEOTIDE SEQUENCE [GENOMIC DNA]</scope>
    <source>
        <tissue>Kidney</tissue>
    </source>
</reference>
<dbReference type="EC" id="7.1.1.9"/>
<dbReference type="EMBL" id="X97337">
    <property type="protein sequence ID" value="CAA66016.1"/>
    <property type="molecule type" value="Genomic_DNA"/>
</dbReference>
<dbReference type="PIR" id="T11365">
    <property type="entry name" value="T11365"/>
</dbReference>
<dbReference type="SMR" id="P92477"/>
<dbReference type="KEGG" id="eai:808066"/>
<dbReference type="CTD" id="4512"/>
<dbReference type="UniPathway" id="UPA00705"/>
<dbReference type="Proteomes" id="UP000694387">
    <property type="component" value="Mitochondrion MT"/>
</dbReference>
<dbReference type="GO" id="GO:0005743">
    <property type="term" value="C:mitochondrial inner membrane"/>
    <property type="evidence" value="ECO:0007669"/>
    <property type="project" value="UniProtKB-SubCell"/>
</dbReference>
<dbReference type="GO" id="GO:0045277">
    <property type="term" value="C:respiratory chain complex IV"/>
    <property type="evidence" value="ECO:0000250"/>
    <property type="project" value="UniProtKB"/>
</dbReference>
<dbReference type="GO" id="GO:0004129">
    <property type="term" value="F:cytochrome-c oxidase activity"/>
    <property type="evidence" value="ECO:0007669"/>
    <property type="project" value="UniProtKB-EC"/>
</dbReference>
<dbReference type="GO" id="GO:0020037">
    <property type="term" value="F:heme binding"/>
    <property type="evidence" value="ECO:0007669"/>
    <property type="project" value="InterPro"/>
</dbReference>
<dbReference type="GO" id="GO:0046872">
    <property type="term" value="F:metal ion binding"/>
    <property type="evidence" value="ECO:0007669"/>
    <property type="project" value="UniProtKB-KW"/>
</dbReference>
<dbReference type="GO" id="GO:0015990">
    <property type="term" value="P:electron transport coupled proton transport"/>
    <property type="evidence" value="ECO:0007669"/>
    <property type="project" value="TreeGrafter"/>
</dbReference>
<dbReference type="GO" id="GO:0006123">
    <property type="term" value="P:mitochondrial electron transport, cytochrome c to oxygen"/>
    <property type="evidence" value="ECO:0007669"/>
    <property type="project" value="TreeGrafter"/>
</dbReference>
<dbReference type="CDD" id="cd01663">
    <property type="entry name" value="Cyt_c_Oxidase_I"/>
    <property type="match status" value="1"/>
</dbReference>
<dbReference type="FunFam" id="1.20.210.10:FF:000001">
    <property type="entry name" value="Cytochrome c oxidase subunit 1"/>
    <property type="match status" value="1"/>
</dbReference>
<dbReference type="Gene3D" id="1.20.210.10">
    <property type="entry name" value="Cytochrome c oxidase-like, subunit I domain"/>
    <property type="match status" value="1"/>
</dbReference>
<dbReference type="InterPro" id="IPR023616">
    <property type="entry name" value="Cyt_c_oxase-like_su1_dom"/>
</dbReference>
<dbReference type="InterPro" id="IPR036927">
    <property type="entry name" value="Cyt_c_oxase-like_su1_sf"/>
</dbReference>
<dbReference type="InterPro" id="IPR000883">
    <property type="entry name" value="Cyt_C_Oxase_1"/>
</dbReference>
<dbReference type="InterPro" id="IPR023615">
    <property type="entry name" value="Cyt_c_Oxase_su1_BS"/>
</dbReference>
<dbReference type="InterPro" id="IPR033944">
    <property type="entry name" value="Cyt_c_oxase_su1_dom"/>
</dbReference>
<dbReference type="PANTHER" id="PTHR10422">
    <property type="entry name" value="CYTOCHROME C OXIDASE SUBUNIT 1"/>
    <property type="match status" value="1"/>
</dbReference>
<dbReference type="PANTHER" id="PTHR10422:SF18">
    <property type="entry name" value="CYTOCHROME C OXIDASE SUBUNIT 1"/>
    <property type="match status" value="1"/>
</dbReference>
<dbReference type="Pfam" id="PF00115">
    <property type="entry name" value="COX1"/>
    <property type="match status" value="1"/>
</dbReference>
<dbReference type="PRINTS" id="PR01165">
    <property type="entry name" value="CYCOXIDASEI"/>
</dbReference>
<dbReference type="SUPFAM" id="SSF81442">
    <property type="entry name" value="Cytochrome c oxidase subunit I-like"/>
    <property type="match status" value="1"/>
</dbReference>
<dbReference type="PROSITE" id="PS50855">
    <property type="entry name" value="COX1"/>
    <property type="match status" value="1"/>
</dbReference>
<dbReference type="PROSITE" id="PS00077">
    <property type="entry name" value="COX1_CUB"/>
    <property type="match status" value="1"/>
</dbReference>
<evidence type="ECO:0000250" key="1">
    <source>
        <dbReference type="UniProtKB" id="P00395"/>
    </source>
</evidence>
<evidence type="ECO:0000250" key="2">
    <source>
        <dbReference type="UniProtKB" id="P00396"/>
    </source>
</evidence>
<evidence type="ECO:0000250" key="3">
    <source>
        <dbReference type="UniProtKB" id="P00401"/>
    </source>
</evidence>
<evidence type="ECO:0000305" key="4"/>
<gene>
    <name type="primary">MT-CO1</name>
    <name type="synonym">COI</name>
    <name type="synonym">COXI</name>
    <name type="synonym">MTCO1</name>
</gene>